<dbReference type="EMBL" id="GG698940">
    <property type="protein sequence ID" value="EEU35459.1"/>
    <property type="status" value="ALT_SEQ"/>
    <property type="molecule type" value="Genomic_DNA"/>
</dbReference>
<dbReference type="RefSeq" id="XP_003041172.1">
    <property type="nucleotide sequence ID" value="XM_003041126.1"/>
</dbReference>
<dbReference type="SMR" id="C7ZKL5"/>
<dbReference type="GeneID" id="9675825"/>
<dbReference type="KEGG" id="nhe:NECHADRAFT_97050"/>
<dbReference type="VEuPathDB" id="FungiDB:NECHADRAFT_73962"/>
<dbReference type="InParanoid" id="C7ZKL5"/>
<dbReference type="OrthoDB" id="2533647at2759"/>
<dbReference type="Proteomes" id="UP000005206">
    <property type="component" value="Unassembled WGS sequence"/>
</dbReference>
<dbReference type="Gene3D" id="3.10.450.50">
    <property type="match status" value="1"/>
</dbReference>
<dbReference type="InterPro" id="IPR032710">
    <property type="entry name" value="NTF2-like_dom_sf"/>
</dbReference>
<dbReference type="InterPro" id="IPR037401">
    <property type="entry name" value="SnoaL-like"/>
</dbReference>
<dbReference type="Pfam" id="PF13577">
    <property type="entry name" value="SnoaL_4"/>
    <property type="match status" value="1"/>
</dbReference>
<dbReference type="SUPFAM" id="SSF54427">
    <property type="entry name" value="NTF2-like"/>
    <property type="match status" value="1"/>
</dbReference>
<protein>
    <recommendedName>
        <fullName>PEP2-like protein NECHADRAFT_97050</fullName>
    </recommendedName>
</protein>
<keyword id="KW-1185">Reference proteome</keyword>
<proteinExistence type="inferred from homology"/>
<gene>
    <name type="ORF">NECHADRAFT_97050</name>
</gene>
<name>PEP2L_FUSV7</name>
<feature type="chain" id="PRO_0000402443" description="PEP2-like protein NECHADRAFT_97050">
    <location>
        <begin position="1"/>
        <end position="233"/>
    </location>
</feature>
<comment type="function">
    <text evidence="1">May contribute to the ability of the fungus to cause disease on pea plants.</text>
</comment>
<comment type="similarity">
    <text evidence="2">Belongs to the PEP2 family.</text>
</comment>
<comment type="sequence caution" evidence="2">
    <conflict type="erroneous gene model prediction">
        <sequence resource="EMBL-CDS" id="EEU35459"/>
    </conflict>
</comment>
<accession>C7ZKL5</accession>
<evidence type="ECO:0000250" key="1"/>
<evidence type="ECO:0000305" key="2"/>
<sequence length="233" mass="26859">MVDLHSLPIGSRPSAAIRNNGPDRLVLERLKLRELAEGWPSYRDSCEWENFESIFHPGAHVYTTWSGRVPYQDFITASKAGMDKGAFIMHRCHGTSTDINAEGTRAVTKLKAIITQRFEVDGAEFDVEADCRFCFFFEKVGSRWGAQLVRHWYEKDKMIPANPARFPAVDEERLKGYPPGYRYLAYWQEATMGVKVLLDMPGHRRHVGTPNLEKHDLLYRQAKQWLEGEQIEI</sequence>
<reference key="1">
    <citation type="journal article" date="2009" name="PLoS Genet.">
        <title>The genome of Nectria haematococca: contribution of supernumerary chromosomes to gene expansion.</title>
        <authorList>
            <person name="Coleman J.J."/>
            <person name="Rounsley S.D."/>
            <person name="Rodriguez-Carres M."/>
            <person name="Kuo A."/>
            <person name="Wasmann C.C."/>
            <person name="Grimwood J."/>
            <person name="Schmutz J."/>
            <person name="Taga M."/>
            <person name="White G.J."/>
            <person name="Zhou S."/>
            <person name="Schwartz D.C."/>
            <person name="Freitag M."/>
            <person name="Ma L.-J."/>
            <person name="Danchin E.G.J."/>
            <person name="Henrissat B."/>
            <person name="Coutinho P.M."/>
            <person name="Nelson D.R."/>
            <person name="Straney D."/>
            <person name="Napoli C.A."/>
            <person name="Barker B.M."/>
            <person name="Gribskov M."/>
            <person name="Rep M."/>
            <person name="Kroken S."/>
            <person name="Molnar I."/>
            <person name="Rensing C."/>
            <person name="Kennell J.C."/>
            <person name="Zamora J."/>
            <person name="Farman M.L."/>
            <person name="Selker E.U."/>
            <person name="Salamov A."/>
            <person name="Shapiro H."/>
            <person name="Pangilinan J."/>
            <person name="Lindquist E."/>
            <person name="Lamers C."/>
            <person name="Grigoriev I.V."/>
            <person name="Geiser D.M."/>
            <person name="Covert S.F."/>
            <person name="Temporini E."/>
            <person name="VanEtten H.D."/>
        </authorList>
    </citation>
    <scope>NUCLEOTIDE SEQUENCE [LARGE SCALE GENOMIC DNA]</scope>
    <source>
        <strain>ATCC MYA-4622 / CBS 123669 / FGSC 9596 / NRRL 45880 / 77-13-4</strain>
    </source>
</reference>
<organism>
    <name type="scientific">Fusarium vanettenii (strain ATCC MYA-4622 / CBS 123669 / FGSC 9596 / NRRL 45880 / 77-13-4)</name>
    <name type="common">Fusarium solani subsp. pisi</name>
    <dbReference type="NCBI Taxonomy" id="660122"/>
    <lineage>
        <taxon>Eukaryota</taxon>
        <taxon>Fungi</taxon>
        <taxon>Dikarya</taxon>
        <taxon>Ascomycota</taxon>
        <taxon>Pezizomycotina</taxon>
        <taxon>Sordariomycetes</taxon>
        <taxon>Hypocreomycetidae</taxon>
        <taxon>Hypocreales</taxon>
        <taxon>Nectriaceae</taxon>
        <taxon>Fusarium</taxon>
        <taxon>Fusarium solani species complex</taxon>
        <taxon>Fusarium vanettenii</taxon>
    </lineage>
</organism>